<evidence type="ECO:0000255" key="1">
    <source>
        <dbReference type="HAMAP-Rule" id="MF_00374"/>
    </source>
</evidence>
<evidence type="ECO:0000305" key="2"/>
<reference key="1">
    <citation type="journal article" date="2007" name="ISME J.">
        <title>Population level functional diversity in a microbial community revealed by comparative genomic and metagenomic analyses.</title>
        <authorList>
            <person name="Bhaya D."/>
            <person name="Grossman A.R."/>
            <person name="Steunou A.-S."/>
            <person name="Khuri N."/>
            <person name="Cohan F.M."/>
            <person name="Hamamura N."/>
            <person name="Melendrez M.C."/>
            <person name="Bateson M.M."/>
            <person name="Ward D.M."/>
            <person name="Heidelberg J.F."/>
        </authorList>
    </citation>
    <scope>NUCLEOTIDE SEQUENCE [LARGE SCALE GENOMIC DNA]</scope>
    <source>
        <strain>JA-2-3B'a(2-13)</strain>
    </source>
</reference>
<proteinExistence type="inferred from homology"/>
<accession>Q2JIL9</accession>
<protein>
    <recommendedName>
        <fullName evidence="1">Large ribosomal subunit protein uL29</fullName>
    </recommendedName>
    <alternativeName>
        <fullName evidence="2">50S ribosomal protein L29</fullName>
    </alternativeName>
</protein>
<feature type="chain" id="PRO_1000007637" description="Large ribosomal subunit protein uL29">
    <location>
        <begin position="1"/>
        <end position="73"/>
    </location>
</feature>
<comment type="similarity">
    <text evidence="1">Belongs to the universal ribosomal protein uL29 family.</text>
</comment>
<name>RL29_SYNJB</name>
<keyword id="KW-1185">Reference proteome</keyword>
<keyword id="KW-0687">Ribonucleoprotein</keyword>
<keyword id="KW-0689">Ribosomal protein</keyword>
<gene>
    <name evidence="1" type="primary">rpmC</name>
    <name evidence="1" type="synonym">rpl29</name>
    <name type="ordered locus">CYB_2605</name>
</gene>
<organism>
    <name type="scientific">Synechococcus sp. (strain JA-2-3B'a(2-13))</name>
    <name type="common">Cyanobacteria bacterium Yellowstone B-Prime</name>
    <dbReference type="NCBI Taxonomy" id="321332"/>
    <lineage>
        <taxon>Bacteria</taxon>
        <taxon>Bacillati</taxon>
        <taxon>Cyanobacteriota</taxon>
        <taxon>Cyanophyceae</taxon>
        <taxon>Synechococcales</taxon>
        <taxon>Synechococcaceae</taxon>
        <taxon>Synechococcus</taxon>
    </lineage>
</organism>
<dbReference type="EMBL" id="CP000240">
    <property type="protein sequence ID" value="ABD03535.1"/>
    <property type="molecule type" value="Genomic_DNA"/>
</dbReference>
<dbReference type="RefSeq" id="WP_011434160.1">
    <property type="nucleotide sequence ID" value="NC_007776.1"/>
</dbReference>
<dbReference type="SMR" id="Q2JIL9"/>
<dbReference type="STRING" id="321332.CYB_2605"/>
<dbReference type="KEGG" id="cyb:CYB_2605"/>
<dbReference type="eggNOG" id="COG0255">
    <property type="taxonomic scope" value="Bacteria"/>
</dbReference>
<dbReference type="HOGENOM" id="CLU_158491_0_0_3"/>
<dbReference type="OrthoDB" id="9815192at2"/>
<dbReference type="Proteomes" id="UP000001938">
    <property type="component" value="Chromosome"/>
</dbReference>
<dbReference type="GO" id="GO:0022625">
    <property type="term" value="C:cytosolic large ribosomal subunit"/>
    <property type="evidence" value="ECO:0007669"/>
    <property type="project" value="TreeGrafter"/>
</dbReference>
<dbReference type="GO" id="GO:0003735">
    <property type="term" value="F:structural constituent of ribosome"/>
    <property type="evidence" value="ECO:0007669"/>
    <property type="project" value="InterPro"/>
</dbReference>
<dbReference type="GO" id="GO:0006412">
    <property type="term" value="P:translation"/>
    <property type="evidence" value="ECO:0007669"/>
    <property type="project" value="UniProtKB-UniRule"/>
</dbReference>
<dbReference type="CDD" id="cd00427">
    <property type="entry name" value="Ribosomal_L29_HIP"/>
    <property type="match status" value="1"/>
</dbReference>
<dbReference type="Gene3D" id="1.10.287.310">
    <property type="match status" value="1"/>
</dbReference>
<dbReference type="HAMAP" id="MF_00374">
    <property type="entry name" value="Ribosomal_uL29"/>
    <property type="match status" value="1"/>
</dbReference>
<dbReference type="InterPro" id="IPR050063">
    <property type="entry name" value="Ribosomal_protein_uL29"/>
</dbReference>
<dbReference type="InterPro" id="IPR001854">
    <property type="entry name" value="Ribosomal_uL29"/>
</dbReference>
<dbReference type="InterPro" id="IPR036049">
    <property type="entry name" value="Ribosomal_uL29_sf"/>
</dbReference>
<dbReference type="NCBIfam" id="TIGR00012">
    <property type="entry name" value="L29"/>
    <property type="match status" value="1"/>
</dbReference>
<dbReference type="PANTHER" id="PTHR10916">
    <property type="entry name" value="60S RIBOSOMAL PROTEIN L35/50S RIBOSOMAL PROTEIN L29"/>
    <property type="match status" value="1"/>
</dbReference>
<dbReference type="PANTHER" id="PTHR10916:SF0">
    <property type="entry name" value="LARGE RIBOSOMAL SUBUNIT PROTEIN UL29C"/>
    <property type="match status" value="1"/>
</dbReference>
<dbReference type="Pfam" id="PF00831">
    <property type="entry name" value="Ribosomal_L29"/>
    <property type="match status" value="1"/>
</dbReference>
<dbReference type="SUPFAM" id="SSF46561">
    <property type="entry name" value="Ribosomal protein L29 (L29p)"/>
    <property type="match status" value="1"/>
</dbReference>
<sequence>MPMPKIADARALSDEELSNEIYAVKKELFELRLQQATRQLNQPHLIRLRKHKLAQLLTVEGERKRGKRPTKEE</sequence>